<protein>
    <recommendedName>
        <fullName evidence="6">Alpha pinene synthase, chloroplastic</fullName>
        <shortName evidence="6">LvPINS</shortName>
        <ecNumber evidence="5">4.2.3.-</ecNumber>
    </recommendedName>
</protein>
<sequence length="600" mass="70126">MSSISMHAGPLNISAANNHHPSWDRRVSKPRRVAAKHLRLRLSCSLQLDGKPLDETRRSANYQPSAWDFNFIQSLHNQYKEDKYVTRHTELTAQVKMLLEEETDAVQQLDLIEDLKNLGINYLFKDKIQQILNHIYNQHRCFQNNQVEGNDLYFTALGFRLLRQHGFEVSQEVFDRFTNEEGTDFNPSLIDDTKGLLQLYEASFLLREGEDTLELARQFSTKLLQKKVDEDGDREVGDNLLVWIRHSLELPLHWRIHRIEARWFLDAYATRHDMNPIIFELAKLDFNITQATQQEELRDLSRWWNSAGLVEKLSFARDRVVESYFWAIGTLEPRQYGYQRKLVAKIIALISVVDDVYDIYGTLDELKLFTDVMRRWDAESFDQLPYYMKICYLIINNFIFELAYDILKDKGFNSLSYLQRSWLDVVEGYFTEAKWYYSGYTPNLEEYLKNAKITVTCPMILSQIYFTIASSIEKPELESMYKYHDILYLSGLLLRLPDDLGTALHELKRGDVPKAMQCYMKEKNVPEKEAREHVRFLIREASKQMNTVSAADCPFPDDFVAAAANLGRVANFVYVDGDGFGDQHSKMLQQIAALMFEPYD</sequence>
<dbReference type="EC" id="4.2.3.-" evidence="5"/>
<dbReference type="EMBL" id="JX501518">
    <property type="protein sequence ID" value="AGN72805.1"/>
    <property type="molecule type" value="mRNA"/>
</dbReference>
<dbReference type="SMR" id="T1RRI8"/>
<dbReference type="BRENDA" id="4.2.3.121">
    <property type="organism ID" value="13953"/>
</dbReference>
<dbReference type="UniPathway" id="UPA00213"/>
<dbReference type="GO" id="GO:0009507">
    <property type="term" value="C:chloroplast"/>
    <property type="evidence" value="ECO:0007669"/>
    <property type="project" value="UniProtKB-SubCell"/>
</dbReference>
<dbReference type="GO" id="GO:0016829">
    <property type="term" value="F:lyase activity"/>
    <property type="evidence" value="ECO:0000314"/>
    <property type="project" value="UniProtKB"/>
</dbReference>
<dbReference type="GO" id="GO:0000287">
    <property type="term" value="F:magnesium ion binding"/>
    <property type="evidence" value="ECO:0007669"/>
    <property type="project" value="InterPro"/>
</dbReference>
<dbReference type="GO" id="GO:0050550">
    <property type="term" value="F:pinene synthase activity"/>
    <property type="evidence" value="ECO:0000314"/>
    <property type="project" value="UniProtKB"/>
</dbReference>
<dbReference type="GO" id="GO:0010333">
    <property type="term" value="F:terpene synthase activity"/>
    <property type="evidence" value="ECO:0000314"/>
    <property type="project" value="UniProtKB"/>
</dbReference>
<dbReference type="GO" id="GO:0046248">
    <property type="term" value="P:alpha-pinene biosynthetic process"/>
    <property type="evidence" value="ECO:0000314"/>
    <property type="project" value="UniProtKB"/>
</dbReference>
<dbReference type="GO" id="GO:0016102">
    <property type="term" value="P:diterpenoid biosynthetic process"/>
    <property type="evidence" value="ECO:0007669"/>
    <property type="project" value="InterPro"/>
</dbReference>
<dbReference type="GO" id="GO:0010597">
    <property type="term" value="P:green leaf volatile biosynthetic process"/>
    <property type="evidence" value="ECO:0000314"/>
    <property type="project" value="UniProtKB"/>
</dbReference>
<dbReference type="GO" id="GO:0016099">
    <property type="term" value="P:monoterpenoid biosynthetic process"/>
    <property type="evidence" value="ECO:0000314"/>
    <property type="project" value="UniProtKB"/>
</dbReference>
<dbReference type="CDD" id="cd00684">
    <property type="entry name" value="Terpene_cyclase_plant_C1"/>
    <property type="match status" value="1"/>
</dbReference>
<dbReference type="FunFam" id="1.10.600.10:FF:000007">
    <property type="entry name" value="Isoprene synthase, chloroplastic"/>
    <property type="match status" value="1"/>
</dbReference>
<dbReference type="FunFam" id="1.50.10.130:FF:000001">
    <property type="entry name" value="Isoprene synthase, chloroplastic"/>
    <property type="match status" value="1"/>
</dbReference>
<dbReference type="Gene3D" id="1.10.600.10">
    <property type="entry name" value="Farnesyl Diphosphate Synthase"/>
    <property type="match status" value="1"/>
</dbReference>
<dbReference type="Gene3D" id="1.50.10.130">
    <property type="entry name" value="Terpene synthase, N-terminal domain"/>
    <property type="match status" value="1"/>
</dbReference>
<dbReference type="InterPro" id="IPR008949">
    <property type="entry name" value="Isoprenoid_synthase_dom_sf"/>
</dbReference>
<dbReference type="InterPro" id="IPR034741">
    <property type="entry name" value="Terpene_cyclase-like_1_C"/>
</dbReference>
<dbReference type="InterPro" id="IPR044814">
    <property type="entry name" value="Terpene_cyclase_plant_C1"/>
</dbReference>
<dbReference type="InterPro" id="IPR001906">
    <property type="entry name" value="Terpene_synth_N"/>
</dbReference>
<dbReference type="InterPro" id="IPR036965">
    <property type="entry name" value="Terpene_synth_N_sf"/>
</dbReference>
<dbReference type="InterPro" id="IPR050148">
    <property type="entry name" value="Terpene_synthase-like"/>
</dbReference>
<dbReference type="InterPro" id="IPR005630">
    <property type="entry name" value="Terpene_synthase_metal-bd"/>
</dbReference>
<dbReference type="InterPro" id="IPR008930">
    <property type="entry name" value="Terpenoid_cyclase/PrenylTrfase"/>
</dbReference>
<dbReference type="PANTHER" id="PTHR31225">
    <property type="entry name" value="OS04G0344100 PROTEIN-RELATED"/>
    <property type="match status" value="1"/>
</dbReference>
<dbReference type="PANTHER" id="PTHR31225:SF9">
    <property type="entry name" value="TERPENE SYNTHASE 10"/>
    <property type="match status" value="1"/>
</dbReference>
<dbReference type="Pfam" id="PF01397">
    <property type="entry name" value="Terpene_synth"/>
    <property type="match status" value="1"/>
</dbReference>
<dbReference type="Pfam" id="PF03936">
    <property type="entry name" value="Terpene_synth_C"/>
    <property type="match status" value="1"/>
</dbReference>
<dbReference type="SFLD" id="SFLDG01019">
    <property type="entry name" value="Terpene_Cyclase_Like_1_C_Termi"/>
    <property type="match status" value="1"/>
</dbReference>
<dbReference type="SFLD" id="SFLDG01604">
    <property type="entry name" value="Terpene_Cyclase_Like_1_C_Termi"/>
    <property type="match status" value="1"/>
</dbReference>
<dbReference type="SFLD" id="SFLDG01014">
    <property type="entry name" value="Terpene_Cyclase_Like_1_N-term"/>
    <property type="match status" value="1"/>
</dbReference>
<dbReference type="SUPFAM" id="SSF48239">
    <property type="entry name" value="Terpenoid cyclases/Protein prenyltransferases"/>
    <property type="match status" value="1"/>
</dbReference>
<dbReference type="SUPFAM" id="SSF48576">
    <property type="entry name" value="Terpenoid synthases"/>
    <property type="match status" value="1"/>
</dbReference>
<evidence type="ECO:0000250" key="1">
    <source>
        <dbReference type="UniProtKB" id="A0A1C9J6A7"/>
    </source>
</evidence>
<evidence type="ECO:0000250" key="2">
    <source>
        <dbReference type="UniProtKB" id="Q40577"/>
    </source>
</evidence>
<evidence type="ECO:0000255" key="3"/>
<evidence type="ECO:0000256" key="4">
    <source>
        <dbReference type="SAM" id="MobiDB-lite"/>
    </source>
</evidence>
<evidence type="ECO:0000269" key="5">
    <source>
    </source>
</evidence>
<evidence type="ECO:0000303" key="6">
    <source>
    </source>
</evidence>
<evidence type="ECO:0000305" key="7"/>
<comment type="function">
    <text evidence="5">Monoterpene synthase involved in the biosynthesis of volatile compounds widely used in aromatherapy and folk medicine, and present in culinary herbs (PubMed:24943828). Mediates the conversion of (2E)-geranyl diphosphate (GPP) into alpha-pinene and, as minor compounds, into alpha-phellandrene, limonene and alpha-terpinolene (PubMed:24943828).</text>
</comment>
<comment type="catalytic activity">
    <reaction evidence="5">
        <text>(2E)-geranyl diphosphate = alpha-pinene + diphosphate</text>
        <dbReference type="Rhea" id="RHEA:25662"/>
        <dbReference type="ChEBI" id="CHEBI:33019"/>
        <dbReference type="ChEBI" id="CHEBI:36740"/>
        <dbReference type="ChEBI" id="CHEBI:58057"/>
    </reaction>
    <physiologicalReaction direction="left-to-right" evidence="5">
        <dbReference type="Rhea" id="RHEA:25663"/>
    </physiologicalReaction>
</comment>
<comment type="cofactor">
    <cofactor evidence="1">
        <name>Mg(2+)</name>
        <dbReference type="ChEBI" id="CHEBI:18420"/>
    </cofactor>
    <cofactor evidence="1">
        <name>Mn(2+)</name>
        <dbReference type="ChEBI" id="CHEBI:29035"/>
    </cofactor>
    <text evidence="1">Binds 3 Mg(2+) or Mn(2+) ions per subunit.</text>
</comment>
<comment type="pathway">
    <text evidence="5">Secondary metabolite biosynthesis; terpenoid biosynthesis.</text>
</comment>
<comment type="subcellular location">
    <subcellularLocation>
        <location evidence="3">Plastid</location>
        <location evidence="3">Chloroplast</location>
    </subcellularLocation>
</comment>
<comment type="tissue specificity">
    <text evidence="5">Expressed at low levels in leaves.</text>
</comment>
<comment type="domain">
    <text evidence="2">The Asp-Asp-Xaa-Xaa-Asp/Glu (DDXXD/E) motif is important for the catalytic activity, presumably through binding to Mg(2+).</text>
</comment>
<comment type="similarity">
    <text evidence="7">Belongs to the terpene synthase family. Tpsa subfamily.</text>
</comment>
<name>PINS_LAVVI</name>
<feature type="transit peptide" description="Chloroplast" evidence="3">
    <location>
        <begin position="1"/>
        <end position="31"/>
    </location>
</feature>
<feature type="chain" id="PRO_0000454960" description="Alpha pinene synthase, chloroplastic">
    <location>
        <begin position="32"/>
        <end position="600"/>
    </location>
</feature>
<feature type="region of interest" description="Disordered" evidence="4">
    <location>
        <begin position="1"/>
        <end position="27"/>
    </location>
</feature>
<feature type="short sequence motif" description="DDXXD motif" evidence="1">
    <location>
        <begin position="354"/>
        <end position="358"/>
    </location>
</feature>
<feature type="binding site" evidence="2">
    <location>
        <position position="354"/>
    </location>
    <ligand>
        <name>Mg(2+)</name>
        <dbReference type="ChEBI" id="CHEBI:18420"/>
        <label>1</label>
    </ligand>
</feature>
<feature type="binding site" evidence="2">
    <location>
        <position position="354"/>
    </location>
    <ligand>
        <name>Mg(2+)</name>
        <dbReference type="ChEBI" id="CHEBI:18420"/>
        <label>2</label>
    </ligand>
</feature>
<feature type="binding site" evidence="2">
    <location>
        <position position="358"/>
    </location>
    <ligand>
        <name>Mg(2+)</name>
        <dbReference type="ChEBI" id="CHEBI:18420"/>
        <label>1</label>
    </ligand>
</feature>
<feature type="binding site" evidence="2">
    <location>
        <position position="358"/>
    </location>
    <ligand>
        <name>Mg(2+)</name>
        <dbReference type="ChEBI" id="CHEBI:18420"/>
        <label>2</label>
    </ligand>
</feature>
<feature type="binding site" evidence="2">
    <location>
        <position position="498"/>
    </location>
    <ligand>
        <name>Mg(2+)</name>
        <dbReference type="ChEBI" id="CHEBI:18420"/>
        <label>3</label>
    </ligand>
</feature>
<feature type="binding site" evidence="2">
    <location>
        <position position="506"/>
    </location>
    <ligand>
        <name>Mg(2+)</name>
        <dbReference type="ChEBI" id="CHEBI:18420"/>
        <label>3</label>
    </ligand>
</feature>
<organism>
    <name type="scientific">Lavandula viridis</name>
    <name type="common">Green lavender</name>
    <dbReference type="NCBI Taxonomy" id="1343918"/>
    <lineage>
        <taxon>Eukaryota</taxon>
        <taxon>Viridiplantae</taxon>
        <taxon>Streptophyta</taxon>
        <taxon>Embryophyta</taxon>
        <taxon>Tracheophyta</taxon>
        <taxon>Spermatophyta</taxon>
        <taxon>Magnoliopsida</taxon>
        <taxon>eudicotyledons</taxon>
        <taxon>Gunneridae</taxon>
        <taxon>Pentapetalae</taxon>
        <taxon>asterids</taxon>
        <taxon>lamiids</taxon>
        <taxon>Lamiales</taxon>
        <taxon>Lamiaceae</taxon>
        <taxon>Nepetoideae</taxon>
        <taxon>Ocimeae</taxon>
        <taxon>Lavandulinae</taxon>
        <taxon>Lavandula</taxon>
    </lineage>
</organism>
<accession>T1RRI8</accession>
<keyword id="KW-0150">Chloroplast</keyword>
<keyword id="KW-0456">Lyase</keyword>
<keyword id="KW-0460">Magnesium</keyword>
<keyword id="KW-0479">Metal-binding</keyword>
<keyword id="KW-0934">Plastid</keyword>
<keyword id="KW-0809">Transit peptide</keyword>
<reference key="1">
    <citation type="journal article" date="2015" name="Physiol. Plantarum">
        <title>Functional characterization of terpene synthases and chemotypic variation in three lavender species of section Stoechas.</title>
        <authorList>
            <person name="Benabdelkader T."/>
            <person name="Guitton Y."/>
            <person name="Pasquier B."/>
            <person name="Magnard J.L."/>
            <person name="Jullien F."/>
            <person name="Kameli A."/>
            <person name="Legendre L."/>
        </authorList>
    </citation>
    <scope>NUCLEOTIDE SEQUENCE [MRNA]</scope>
    <scope>FUNCTION</scope>
    <scope>CATALYTIC ACTIVITY</scope>
    <scope>PATHWAY</scope>
    <scope>TISSUE SPECIFICITY</scope>
    <source>
        <tissue>Leaf</tissue>
    </source>
</reference>
<proteinExistence type="evidence at protein level"/>
<gene>
    <name evidence="6" type="primary">PINS</name>
</gene>